<feature type="chain" id="PRO_0000127845" description="Uncharacterized protein AF_0172">
    <location>
        <begin position="1"/>
        <end position="217"/>
    </location>
</feature>
<feature type="transmembrane region" description="Helical" evidence="1">
    <location>
        <begin position="13"/>
        <end position="35"/>
    </location>
</feature>
<feature type="transmembrane region" description="Helical" evidence="1">
    <location>
        <begin position="50"/>
        <end position="68"/>
    </location>
</feature>
<feature type="transmembrane region" description="Helical" evidence="1">
    <location>
        <begin position="75"/>
        <end position="94"/>
    </location>
</feature>
<feature type="transmembrane region" description="Helical" evidence="1">
    <location>
        <begin position="109"/>
        <end position="131"/>
    </location>
</feature>
<feature type="transmembrane region" description="Helical" evidence="1">
    <location>
        <begin position="152"/>
        <end position="174"/>
    </location>
</feature>
<feature type="transmembrane region" description="Helical" evidence="1">
    <location>
        <begin position="194"/>
        <end position="216"/>
    </location>
</feature>
<sequence>MRLLPKMGGVISIWLTSTLLAMKYLTPLNLAIALLSLLSVNPLMYMKKDFSLVFPILLSALAAYILYLNPTTIYFLLAYSILFIALKFVNEWRIETKIGAFALTFPFPMMALAYGAGLMEILAPLTLLFSLTAFNLFLADSRIYGRVSAKNYLAIIPLALIFYILSHPVLAAAVTAAAIVVTVKANSISVRSFGFSLLFLNLLFVVGFLALDFAGLL</sequence>
<dbReference type="EMBL" id="AE000782">
    <property type="protein sequence ID" value="AAB91063.1"/>
    <property type="molecule type" value="Genomic_DNA"/>
</dbReference>
<dbReference type="PIR" id="D69271">
    <property type="entry name" value="D69271"/>
</dbReference>
<dbReference type="STRING" id="224325.AF_0172"/>
<dbReference type="PaxDb" id="224325-AF_0172"/>
<dbReference type="EnsemblBacteria" id="AAB91063">
    <property type="protein sequence ID" value="AAB91063"/>
    <property type="gene ID" value="AF_0172"/>
</dbReference>
<dbReference type="KEGG" id="afu:AF_0172"/>
<dbReference type="HOGENOM" id="CLU_1269852_0_0_2"/>
<dbReference type="Proteomes" id="UP000002199">
    <property type="component" value="Chromosome"/>
</dbReference>
<dbReference type="GO" id="GO:0005886">
    <property type="term" value="C:plasma membrane"/>
    <property type="evidence" value="ECO:0007669"/>
    <property type="project" value="UniProtKB-SubCell"/>
</dbReference>
<name>Y172_ARCFU</name>
<keyword id="KW-1003">Cell membrane</keyword>
<keyword id="KW-0472">Membrane</keyword>
<keyword id="KW-1185">Reference proteome</keyword>
<keyword id="KW-0812">Transmembrane</keyword>
<keyword id="KW-1133">Transmembrane helix</keyword>
<comment type="subcellular location">
    <subcellularLocation>
        <location evidence="2">Cell membrane</location>
        <topology evidence="2">Multi-pass membrane protein</topology>
    </subcellularLocation>
</comment>
<protein>
    <recommendedName>
        <fullName>Uncharacterized protein AF_0172</fullName>
    </recommendedName>
</protein>
<reference key="1">
    <citation type="journal article" date="1997" name="Nature">
        <title>The complete genome sequence of the hyperthermophilic, sulphate-reducing archaeon Archaeoglobus fulgidus.</title>
        <authorList>
            <person name="Klenk H.-P."/>
            <person name="Clayton R.A."/>
            <person name="Tomb J.-F."/>
            <person name="White O."/>
            <person name="Nelson K.E."/>
            <person name="Ketchum K.A."/>
            <person name="Dodson R.J."/>
            <person name="Gwinn M.L."/>
            <person name="Hickey E.K."/>
            <person name="Peterson J.D."/>
            <person name="Richardson D.L."/>
            <person name="Kerlavage A.R."/>
            <person name="Graham D.E."/>
            <person name="Kyrpides N.C."/>
            <person name="Fleischmann R.D."/>
            <person name="Quackenbush J."/>
            <person name="Lee N.H."/>
            <person name="Sutton G.G."/>
            <person name="Gill S.R."/>
            <person name="Kirkness E.F."/>
            <person name="Dougherty B.A."/>
            <person name="McKenney K."/>
            <person name="Adams M.D."/>
            <person name="Loftus B.J."/>
            <person name="Peterson S.N."/>
            <person name="Reich C.I."/>
            <person name="McNeil L.K."/>
            <person name="Badger J.H."/>
            <person name="Glodek A."/>
            <person name="Zhou L."/>
            <person name="Overbeek R."/>
            <person name="Gocayne J.D."/>
            <person name="Weidman J.F."/>
            <person name="McDonald L.A."/>
            <person name="Utterback T.R."/>
            <person name="Cotton M.D."/>
            <person name="Spriggs T."/>
            <person name="Artiach P."/>
            <person name="Kaine B.P."/>
            <person name="Sykes S.M."/>
            <person name="Sadow P.W."/>
            <person name="D'Andrea K.P."/>
            <person name="Bowman C."/>
            <person name="Fujii C."/>
            <person name="Garland S.A."/>
            <person name="Mason T.M."/>
            <person name="Olsen G.J."/>
            <person name="Fraser C.M."/>
            <person name="Smith H.O."/>
            <person name="Woese C.R."/>
            <person name="Venter J.C."/>
        </authorList>
    </citation>
    <scope>NUCLEOTIDE SEQUENCE [LARGE SCALE GENOMIC DNA]</scope>
    <source>
        <strain>ATCC 49558 / DSM 4304 / JCM 9628 / NBRC 100126 / VC-16</strain>
    </source>
</reference>
<accession>O30065</accession>
<evidence type="ECO:0000255" key="1"/>
<evidence type="ECO:0000305" key="2"/>
<organism>
    <name type="scientific">Archaeoglobus fulgidus (strain ATCC 49558 / DSM 4304 / JCM 9628 / NBRC 100126 / VC-16)</name>
    <dbReference type="NCBI Taxonomy" id="224325"/>
    <lineage>
        <taxon>Archaea</taxon>
        <taxon>Methanobacteriati</taxon>
        <taxon>Methanobacteriota</taxon>
        <taxon>Archaeoglobi</taxon>
        <taxon>Archaeoglobales</taxon>
        <taxon>Archaeoglobaceae</taxon>
        <taxon>Archaeoglobus</taxon>
    </lineage>
</organism>
<proteinExistence type="predicted"/>
<gene>
    <name type="ordered locus">AF_0172</name>
</gene>